<reference key="1">
    <citation type="journal article" date="2000" name="Proc. Natl. Acad. Sci. U.S.A.">
        <title>Genome sequence of Halobacterium species NRC-1.</title>
        <authorList>
            <person name="Ng W.V."/>
            <person name="Kennedy S.P."/>
            <person name="Mahairas G.G."/>
            <person name="Berquist B."/>
            <person name="Pan M."/>
            <person name="Shukla H.D."/>
            <person name="Lasky S.R."/>
            <person name="Baliga N.S."/>
            <person name="Thorsson V."/>
            <person name="Sbrogna J."/>
            <person name="Swartzell S."/>
            <person name="Weir D."/>
            <person name="Hall J."/>
            <person name="Dahl T.A."/>
            <person name="Welti R."/>
            <person name="Goo Y.A."/>
            <person name="Leithauser B."/>
            <person name="Keller K."/>
            <person name="Cruz R."/>
            <person name="Danson M.J."/>
            <person name="Hough D.W."/>
            <person name="Maddocks D.G."/>
            <person name="Jablonski P.E."/>
            <person name="Krebs M.P."/>
            <person name="Angevine C.M."/>
            <person name="Dale H."/>
            <person name="Isenbarger T.A."/>
            <person name="Peck R.F."/>
            <person name="Pohlschroder M."/>
            <person name="Spudich J.L."/>
            <person name="Jung K.-H."/>
            <person name="Alam M."/>
            <person name="Freitas T."/>
            <person name="Hou S."/>
            <person name="Daniels C.J."/>
            <person name="Dennis P.P."/>
            <person name="Omer A.D."/>
            <person name="Ebhardt H."/>
            <person name="Lowe T.M."/>
            <person name="Liang P."/>
            <person name="Riley M."/>
            <person name="Hood L."/>
            <person name="DasSarma S."/>
        </authorList>
    </citation>
    <scope>NUCLEOTIDE SEQUENCE [LARGE SCALE GENOMIC DNA]</scope>
    <source>
        <strain>ATCC 700922 / JCM 11081 / NRC-1</strain>
    </source>
</reference>
<name>COFC_HALSA</name>
<gene>
    <name evidence="1" type="primary">cofC</name>
    <name type="ordered locus">VNG_1935C</name>
</gene>
<feature type="chain" id="PRO_0000398726" description="2-phospho-L-lactate guanylyltransferase">
    <location>
        <begin position="1"/>
        <end position="209"/>
    </location>
</feature>
<protein>
    <recommendedName>
        <fullName evidence="1">2-phospho-L-lactate guanylyltransferase</fullName>
        <shortName evidence="1">LP guanylyltransferase</shortName>
        <ecNumber evidence="1">2.7.7.68</ecNumber>
    </recommendedName>
</protein>
<keyword id="KW-0342">GTP-binding</keyword>
<keyword id="KW-0547">Nucleotide-binding</keyword>
<keyword id="KW-0548">Nucleotidyltransferase</keyword>
<keyword id="KW-1185">Reference proteome</keyword>
<keyword id="KW-0808">Transferase</keyword>
<sequence length="209" mass="21875">MRTVVPFDPRDPKSRLAEFFADAEERRGFAYAMLADVLGAVRDAGGDPVVVATAPVSRPVDAPVTVDDRALSTAVAAAIADGPLPTAVVMADLALATPDAIRRVFAASGDVVLAPGSGGGTNVVLARTADVPVSYHGVSFRDHVTAAERAGLTVTTVDSFRLAADVDDASDLVDVFVHNTRRTREWLIAGGWRLAVDDGTPTVVREPND</sequence>
<accession>Q9HNV0</accession>
<dbReference type="EC" id="2.7.7.68" evidence="1"/>
<dbReference type="EMBL" id="AE004437">
    <property type="protein sequence ID" value="AAG20120.1"/>
    <property type="molecule type" value="Genomic_DNA"/>
</dbReference>
<dbReference type="PIR" id="D84344">
    <property type="entry name" value="D84344"/>
</dbReference>
<dbReference type="RefSeq" id="WP_010903420.1">
    <property type="nucleotide sequence ID" value="NC_002607.1"/>
</dbReference>
<dbReference type="SMR" id="Q9HNV0"/>
<dbReference type="FunCoup" id="Q9HNV0">
    <property type="interactions" value="67"/>
</dbReference>
<dbReference type="STRING" id="64091.VNG_1935C"/>
<dbReference type="PaxDb" id="64091-VNG_1935C"/>
<dbReference type="GeneID" id="89350131"/>
<dbReference type="KEGG" id="hal:VNG_1935C"/>
<dbReference type="PATRIC" id="fig|64091.14.peg.1479"/>
<dbReference type="HOGENOM" id="CLU_076569_2_0_2"/>
<dbReference type="InParanoid" id="Q9HNV0"/>
<dbReference type="OrthoDB" id="11179at2157"/>
<dbReference type="PhylomeDB" id="Q9HNV0"/>
<dbReference type="UniPathway" id="UPA00071"/>
<dbReference type="Proteomes" id="UP000000554">
    <property type="component" value="Chromosome"/>
</dbReference>
<dbReference type="GO" id="GO:0005525">
    <property type="term" value="F:GTP binding"/>
    <property type="evidence" value="ECO:0007669"/>
    <property type="project" value="UniProtKB-KW"/>
</dbReference>
<dbReference type="GO" id="GO:0043814">
    <property type="term" value="F:phospholactate guanylyltransferase activity"/>
    <property type="evidence" value="ECO:0007669"/>
    <property type="project" value="UniProtKB-EC"/>
</dbReference>
<dbReference type="GO" id="GO:0052645">
    <property type="term" value="P:F420-0 metabolic process"/>
    <property type="evidence" value="ECO:0007669"/>
    <property type="project" value="UniProtKB-UniRule"/>
</dbReference>
<dbReference type="Gene3D" id="6.10.140.50">
    <property type="match status" value="1"/>
</dbReference>
<dbReference type="Gene3D" id="3.90.550.10">
    <property type="entry name" value="Spore Coat Polysaccharide Biosynthesis Protein SpsA, Chain A"/>
    <property type="match status" value="1"/>
</dbReference>
<dbReference type="HAMAP" id="MF_02114">
    <property type="entry name" value="CofC"/>
    <property type="match status" value="1"/>
</dbReference>
<dbReference type="InterPro" id="IPR002835">
    <property type="entry name" value="CofC"/>
</dbReference>
<dbReference type="InterPro" id="IPR029044">
    <property type="entry name" value="Nucleotide-diphossugar_trans"/>
</dbReference>
<dbReference type="NCBIfam" id="TIGR03552">
    <property type="entry name" value="F420_cofC"/>
    <property type="match status" value="1"/>
</dbReference>
<dbReference type="PANTHER" id="PTHR40392">
    <property type="entry name" value="2-PHOSPHO-L-LACTATE GUANYLYLTRANSFERASE"/>
    <property type="match status" value="1"/>
</dbReference>
<dbReference type="PANTHER" id="PTHR40392:SF1">
    <property type="entry name" value="2-PHOSPHO-L-LACTATE GUANYLYLTRANSFERASE"/>
    <property type="match status" value="1"/>
</dbReference>
<dbReference type="Pfam" id="PF01983">
    <property type="entry name" value="CofC"/>
    <property type="match status" value="1"/>
</dbReference>
<dbReference type="SUPFAM" id="SSF53448">
    <property type="entry name" value="Nucleotide-diphospho-sugar transferases"/>
    <property type="match status" value="1"/>
</dbReference>
<proteinExistence type="inferred from homology"/>
<comment type="function">
    <text evidence="1">Guanylyltransferase that catalyzes the activation of (2S)-2-phospholactate (2-PL) as (2S)-lactyl-2-diphospho-5'-guanosine, via the condensation of 2-PL with GTP. It is involved in the biosynthesis of coenzyme F420, a hydride carrier cofactor.</text>
</comment>
<comment type="catalytic activity">
    <reaction evidence="1">
        <text>(2S)-2-phospholactate + GTP + H(+) = (2S)-lactyl-2-diphospho-5'-guanosine + diphosphate</text>
        <dbReference type="Rhea" id="RHEA:63424"/>
        <dbReference type="ChEBI" id="CHEBI:15378"/>
        <dbReference type="ChEBI" id="CHEBI:33019"/>
        <dbReference type="ChEBI" id="CHEBI:37565"/>
        <dbReference type="ChEBI" id="CHEBI:59435"/>
        <dbReference type="ChEBI" id="CHEBI:59906"/>
        <dbReference type="EC" id="2.7.7.68"/>
    </reaction>
</comment>
<comment type="pathway">
    <text evidence="1">Cofactor biosynthesis; coenzyme F420 biosynthesis.</text>
</comment>
<comment type="subunit">
    <text evidence="1">Homodimer.</text>
</comment>
<comment type="similarity">
    <text evidence="1">Belongs to the CofC family.</text>
</comment>
<organism>
    <name type="scientific">Halobacterium salinarum (strain ATCC 700922 / JCM 11081 / NRC-1)</name>
    <name type="common">Halobacterium halobium</name>
    <dbReference type="NCBI Taxonomy" id="64091"/>
    <lineage>
        <taxon>Archaea</taxon>
        <taxon>Methanobacteriati</taxon>
        <taxon>Methanobacteriota</taxon>
        <taxon>Stenosarchaea group</taxon>
        <taxon>Halobacteria</taxon>
        <taxon>Halobacteriales</taxon>
        <taxon>Halobacteriaceae</taxon>
        <taxon>Halobacterium</taxon>
        <taxon>Halobacterium salinarum NRC-34001</taxon>
    </lineage>
</organism>
<evidence type="ECO:0000255" key="1">
    <source>
        <dbReference type="HAMAP-Rule" id="MF_02114"/>
    </source>
</evidence>